<dbReference type="EMBL" id="AJ749949">
    <property type="protein sequence ID" value="CAG44980.1"/>
    <property type="molecule type" value="Genomic_DNA"/>
</dbReference>
<dbReference type="RefSeq" id="WP_003014373.1">
    <property type="nucleotide sequence ID" value="NZ_CP010290.1"/>
</dbReference>
<dbReference type="RefSeq" id="YP_169396.1">
    <property type="nucleotide sequence ID" value="NC_006570.2"/>
</dbReference>
<dbReference type="SMR" id="Q5NHU6"/>
<dbReference type="STRING" id="177416.FTT_0347"/>
<dbReference type="DNASU" id="3191860"/>
<dbReference type="EnsemblBacteria" id="CAG44980">
    <property type="protein sequence ID" value="CAG44980"/>
    <property type="gene ID" value="FTT_0347"/>
</dbReference>
<dbReference type="GeneID" id="75264239"/>
<dbReference type="KEGG" id="ftu:FTT_0347"/>
<dbReference type="eggNOG" id="COG0099">
    <property type="taxonomic scope" value="Bacteria"/>
</dbReference>
<dbReference type="OrthoDB" id="9803610at2"/>
<dbReference type="Proteomes" id="UP000001174">
    <property type="component" value="Chromosome"/>
</dbReference>
<dbReference type="GO" id="GO:0005829">
    <property type="term" value="C:cytosol"/>
    <property type="evidence" value="ECO:0007669"/>
    <property type="project" value="TreeGrafter"/>
</dbReference>
<dbReference type="GO" id="GO:0015935">
    <property type="term" value="C:small ribosomal subunit"/>
    <property type="evidence" value="ECO:0007669"/>
    <property type="project" value="TreeGrafter"/>
</dbReference>
<dbReference type="GO" id="GO:0019843">
    <property type="term" value="F:rRNA binding"/>
    <property type="evidence" value="ECO:0007669"/>
    <property type="project" value="UniProtKB-UniRule"/>
</dbReference>
<dbReference type="GO" id="GO:0003735">
    <property type="term" value="F:structural constituent of ribosome"/>
    <property type="evidence" value="ECO:0007669"/>
    <property type="project" value="InterPro"/>
</dbReference>
<dbReference type="GO" id="GO:0000049">
    <property type="term" value="F:tRNA binding"/>
    <property type="evidence" value="ECO:0007669"/>
    <property type="project" value="UniProtKB-UniRule"/>
</dbReference>
<dbReference type="GO" id="GO:0006412">
    <property type="term" value="P:translation"/>
    <property type="evidence" value="ECO:0007669"/>
    <property type="project" value="UniProtKB-UniRule"/>
</dbReference>
<dbReference type="FunFam" id="1.10.8.50:FF:000001">
    <property type="entry name" value="30S ribosomal protein S13"/>
    <property type="match status" value="1"/>
</dbReference>
<dbReference type="FunFam" id="4.10.910.10:FF:000001">
    <property type="entry name" value="30S ribosomal protein S13"/>
    <property type="match status" value="1"/>
</dbReference>
<dbReference type="Gene3D" id="1.10.8.50">
    <property type="match status" value="1"/>
</dbReference>
<dbReference type="Gene3D" id="4.10.910.10">
    <property type="entry name" value="30s ribosomal protein s13, domain 2"/>
    <property type="match status" value="1"/>
</dbReference>
<dbReference type="HAMAP" id="MF_01315">
    <property type="entry name" value="Ribosomal_uS13"/>
    <property type="match status" value="1"/>
</dbReference>
<dbReference type="InterPro" id="IPR027437">
    <property type="entry name" value="Rbsml_uS13_C"/>
</dbReference>
<dbReference type="InterPro" id="IPR001892">
    <property type="entry name" value="Ribosomal_uS13"/>
</dbReference>
<dbReference type="InterPro" id="IPR010979">
    <property type="entry name" value="Ribosomal_uS13-like_H2TH"/>
</dbReference>
<dbReference type="InterPro" id="IPR019980">
    <property type="entry name" value="Ribosomal_uS13_bac-type"/>
</dbReference>
<dbReference type="InterPro" id="IPR018269">
    <property type="entry name" value="Ribosomal_uS13_CS"/>
</dbReference>
<dbReference type="NCBIfam" id="TIGR03631">
    <property type="entry name" value="uS13_bact"/>
    <property type="match status" value="1"/>
</dbReference>
<dbReference type="PANTHER" id="PTHR10871">
    <property type="entry name" value="30S RIBOSOMAL PROTEIN S13/40S RIBOSOMAL PROTEIN S18"/>
    <property type="match status" value="1"/>
</dbReference>
<dbReference type="PANTHER" id="PTHR10871:SF1">
    <property type="entry name" value="SMALL RIBOSOMAL SUBUNIT PROTEIN US13M"/>
    <property type="match status" value="1"/>
</dbReference>
<dbReference type="Pfam" id="PF00416">
    <property type="entry name" value="Ribosomal_S13"/>
    <property type="match status" value="1"/>
</dbReference>
<dbReference type="PIRSF" id="PIRSF002134">
    <property type="entry name" value="Ribosomal_S13"/>
    <property type="match status" value="1"/>
</dbReference>
<dbReference type="SUPFAM" id="SSF46946">
    <property type="entry name" value="S13-like H2TH domain"/>
    <property type="match status" value="1"/>
</dbReference>
<dbReference type="PROSITE" id="PS00646">
    <property type="entry name" value="RIBOSOMAL_S13_1"/>
    <property type="match status" value="1"/>
</dbReference>
<dbReference type="PROSITE" id="PS50159">
    <property type="entry name" value="RIBOSOMAL_S13_2"/>
    <property type="match status" value="1"/>
</dbReference>
<organism>
    <name type="scientific">Francisella tularensis subsp. tularensis (strain SCHU S4 / Schu 4)</name>
    <dbReference type="NCBI Taxonomy" id="177416"/>
    <lineage>
        <taxon>Bacteria</taxon>
        <taxon>Pseudomonadati</taxon>
        <taxon>Pseudomonadota</taxon>
        <taxon>Gammaproteobacteria</taxon>
        <taxon>Thiotrichales</taxon>
        <taxon>Francisellaceae</taxon>
        <taxon>Francisella</taxon>
    </lineage>
</organism>
<evidence type="ECO:0000255" key="1">
    <source>
        <dbReference type="HAMAP-Rule" id="MF_01315"/>
    </source>
</evidence>
<evidence type="ECO:0000256" key="2">
    <source>
        <dbReference type="SAM" id="MobiDB-lite"/>
    </source>
</evidence>
<evidence type="ECO:0000305" key="3"/>
<sequence>MARIAGVNIPVHKHTVIGLTSIYGIGKTRAQQICQTCNVDPTVKIKDLSEEQVESLRTEVAKFTVEGDLRREVSMDIKRLMDLGCFRGRRHRRSLPVRGQRTKTNARTRKGPRKPIKA</sequence>
<reference key="1">
    <citation type="journal article" date="2005" name="Nat. Genet.">
        <title>The complete genome sequence of Francisella tularensis, the causative agent of tularemia.</title>
        <authorList>
            <person name="Larsson P."/>
            <person name="Oyston P.C.F."/>
            <person name="Chain P."/>
            <person name="Chu M.C."/>
            <person name="Duffield M."/>
            <person name="Fuxelius H.-H."/>
            <person name="Garcia E."/>
            <person name="Haelltorp G."/>
            <person name="Johansson D."/>
            <person name="Isherwood K.E."/>
            <person name="Karp P.D."/>
            <person name="Larsson E."/>
            <person name="Liu Y."/>
            <person name="Michell S."/>
            <person name="Prior J."/>
            <person name="Prior R."/>
            <person name="Malfatti S."/>
            <person name="Sjoestedt A."/>
            <person name="Svensson K."/>
            <person name="Thompson N."/>
            <person name="Vergez L."/>
            <person name="Wagg J.K."/>
            <person name="Wren B.W."/>
            <person name="Lindler L.E."/>
            <person name="Andersson S.G.E."/>
            <person name="Forsman M."/>
            <person name="Titball R.W."/>
        </authorList>
    </citation>
    <scope>NUCLEOTIDE SEQUENCE [LARGE SCALE GENOMIC DNA]</scope>
    <source>
        <strain>SCHU S4 / Schu 4</strain>
    </source>
</reference>
<gene>
    <name evidence="1" type="primary">rpsM</name>
    <name type="ordered locus">FTT_0347</name>
</gene>
<accession>Q5NHU6</accession>
<protein>
    <recommendedName>
        <fullName evidence="1">Small ribosomal subunit protein uS13</fullName>
    </recommendedName>
    <alternativeName>
        <fullName evidence="3">30S ribosomal protein S13</fullName>
    </alternativeName>
</protein>
<name>RS13_FRATT</name>
<proteinExistence type="inferred from homology"/>
<comment type="function">
    <text evidence="1">Located at the top of the head of the 30S subunit, it contacts several helices of the 16S rRNA. In the 70S ribosome it contacts the 23S rRNA (bridge B1a) and protein L5 of the 50S subunit (bridge B1b), connecting the 2 subunits; these bridges are implicated in subunit movement. Contacts the tRNAs in the A and P-sites.</text>
</comment>
<comment type="subunit">
    <text evidence="1">Part of the 30S ribosomal subunit. Forms a loose heterodimer with protein S19. Forms two bridges to the 50S subunit in the 70S ribosome.</text>
</comment>
<comment type="similarity">
    <text evidence="1">Belongs to the universal ribosomal protein uS13 family.</text>
</comment>
<keyword id="KW-1185">Reference proteome</keyword>
<keyword id="KW-0687">Ribonucleoprotein</keyword>
<keyword id="KW-0689">Ribosomal protein</keyword>
<keyword id="KW-0694">RNA-binding</keyword>
<keyword id="KW-0699">rRNA-binding</keyword>
<keyword id="KW-0820">tRNA-binding</keyword>
<feature type="chain" id="PRO_0000230507" description="Small ribosomal subunit protein uS13">
    <location>
        <begin position="1"/>
        <end position="118"/>
    </location>
</feature>
<feature type="region of interest" description="Disordered" evidence="2">
    <location>
        <begin position="91"/>
        <end position="118"/>
    </location>
</feature>